<organism>
    <name type="scientific">Bacillus cereus (strain ATCC 14579 / DSM 31 / CCUG 7414 / JCM 2152 / NBRC 15305 / NCIMB 9373 / NCTC 2599 / NRRL B-3711)</name>
    <dbReference type="NCBI Taxonomy" id="226900"/>
    <lineage>
        <taxon>Bacteria</taxon>
        <taxon>Bacillati</taxon>
        <taxon>Bacillota</taxon>
        <taxon>Bacilli</taxon>
        <taxon>Bacillales</taxon>
        <taxon>Bacillaceae</taxon>
        <taxon>Bacillus</taxon>
        <taxon>Bacillus cereus group</taxon>
    </lineage>
</organism>
<protein>
    <recommendedName>
        <fullName evidence="1">Large ribosomal subunit protein uL24</fullName>
    </recommendedName>
    <alternativeName>
        <fullName evidence="2">50S ribosomal protein L24</fullName>
    </alternativeName>
</protein>
<sequence length="103" mass="11228">MHVKKGDKVQVITGKDKGKQGVILVAFPKQNRVIVEGVNIVKKHSKPSQLNPQGGIITKEAPIHVSNVMILDPKTGEPTRVGFKVEDGKKVRIAKKSGELLDK</sequence>
<feature type="chain" id="PRO_0000130620" description="Large ribosomal subunit protein uL24">
    <location>
        <begin position="1"/>
        <end position="103"/>
    </location>
</feature>
<reference key="1">
    <citation type="journal article" date="2003" name="Nature">
        <title>Genome sequence of Bacillus cereus and comparative analysis with Bacillus anthracis.</title>
        <authorList>
            <person name="Ivanova N."/>
            <person name="Sorokin A."/>
            <person name="Anderson I."/>
            <person name="Galleron N."/>
            <person name="Candelon B."/>
            <person name="Kapatral V."/>
            <person name="Bhattacharyya A."/>
            <person name="Reznik G."/>
            <person name="Mikhailova N."/>
            <person name="Lapidus A."/>
            <person name="Chu L."/>
            <person name="Mazur M."/>
            <person name="Goltsman E."/>
            <person name="Larsen N."/>
            <person name="D'Souza M."/>
            <person name="Walunas T."/>
            <person name="Grechkin Y."/>
            <person name="Pusch G."/>
            <person name="Haselkorn R."/>
            <person name="Fonstein M."/>
            <person name="Ehrlich S.D."/>
            <person name="Overbeek R."/>
            <person name="Kyrpides N.C."/>
        </authorList>
    </citation>
    <scope>NUCLEOTIDE SEQUENCE [LARGE SCALE GENOMIC DNA]</scope>
    <source>
        <strain>ATCC 14579 / DSM 31 / CCUG 7414 / JCM 2152 / NBRC 15305 / NCIMB 9373 / NCTC 2599 / NRRL B-3711</strain>
    </source>
</reference>
<keyword id="KW-1185">Reference proteome</keyword>
<keyword id="KW-0687">Ribonucleoprotein</keyword>
<keyword id="KW-0689">Ribosomal protein</keyword>
<keyword id="KW-0694">RNA-binding</keyword>
<keyword id="KW-0699">rRNA-binding</keyword>
<name>RL24_BACCR</name>
<proteinExistence type="inferred from homology"/>
<comment type="function">
    <text evidence="1">One of two assembly initiator proteins, it binds directly to the 5'-end of the 23S rRNA, where it nucleates assembly of the 50S subunit.</text>
</comment>
<comment type="function">
    <text evidence="1">One of the proteins that surrounds the polypeptide exit tunnel on the outside of the subunit.</text>
</comment>
<comment type="subunit">
    <text evidence="1">Part of the 50S ribosomal subunit.</text>
</comment>
<comment type="similarity">
    <text evidence="1">Belongs to the universal ribosomal protein uL24 family.</text>
</comment>
<accession>Q81J31</accession>
<gene>
    <name evidence="1" type="primary">rplX</name>
    <name type="ordered locus">BC_0142</name>
</gene>
<dbReference type="EMBL" id="AE016877">
    <property type="protein sequence ID" value="AAP07223.1"/>
    <property type="molecule type" value="Genomic_DNA"/>
</dbReference>
<dbReference type="RefSeq" id="NP_830022.1">
    <property type="nucleotide sequence ID" value="NC_004722.1"/>
</dbReference>
<dbReference type="RefSeq" id="WP_000558200.1">
    <property type="nucleotide sequence ID" value="NZ_CP138336.1"/>
</dbReference>
<dbReference type="SMR" id="Q81J31"/>
<dbReference type="STRING" id="226900.BC_0142"/>
<dbReference type="MetOSite" id="Q81J31"/>
<dbReference type="GeneID" id="93010932"/>
<dbReference type="KEGG" id="bce:BC0142"/>
<dbReference type="PATRIC" id="fig|226900.8.peg.143"/>
<dbReference type="HOGENOM" id="CLU_093315_2_0_9"/>
<dbReference type="OrthoDB" id="9807419at2"/>
<dbReference type="PRO" id="PR:Q81J31"/>
<dbReference type="Proteomes" id="UP000001417">
    <property type="component" value="Chromosome"/>
</dbReference>
<dbReference type="GO" id="GO:0022625">
    <property type="term" value="C:cytosolic large ribosomal subunit"/>
    <property type="evidence" value="ECO:0000318"/>
    <property type="project" value="GO_Central"/>
</dbReference>
<dbReference type="GO" id="GO:0019843">
    <property type="term" value="F:rRNA binding"/>
    <property type="evidence" value="ECO:0007669"/>
    <property type="project" value="UniProtKB-UniRule"/>
</dbReference>
<dbReference type="GO" id="GO:0003735">
    <property type="term" value="F:structural constituent of ribosome"/>
    <property type="evidence" value="ECO:0007669"/>
    <property type="project" value="InterPro"/>
</dbReference>
<dbReference type="GO" id="GO:0006412">
    <property type="term" value="P:translation"/>
    <property type="evidence" value="ECO:0000318"/>
    <property type="project" value="GO_Central"/>
</dbReference>
<dbReference type="CDD" id="cd06089">
    <property type="entry name" value="KOW_RPL26"/>
    <property type="match status" value="1"/>
</dbReference>
<dbReference type="FunFam" id="2.30.30.30:FF:000004">
    <property type="entry name" value="50S ribosomal protein L24"/>
    <property type="match status" value="1"/>
</dbReference>
<dbReference type="Gene3D" id="2.30.30.30">
    <property type="match status" value="1"/>
</dbReference>
<dbReference type="HAMAP" id="MF_01326_B">
    <property type="entry name" value="Ribosomal_uL24_B"/>
    <property type="match status" value="1"/>
</dbReference>
<dbReference type="InterPro" id="IPR005824">
    <property type="entry name" value="KOW"/>
</dbReference>
<dbReference type="InterPro" id="IPR014722">
    <property type="entry name" value="Rib_uL2_dom2"/>
</dbReference>
<dbReference type="InterPro" id="IPR003256">
    <property type="entry name" value="Ribosomal_uL24"/>
</dbReference>
<dbReference type="InterPro" id="IPR005825">
    <property type="entry name" value="Ribosomal_uL24_CS"/>
</dbReference>
<dbReference type="InterPro" id="IPR041988">
    <property type="entry name" value="Ribosomal_uL24_KOW"/>
</dbReference>
<dbReference type="InterPro" id="IPR008991">
    <property type="entry name" value="Translation_prot_SH3-like_sf"/>
</dbReference>
<dbReference type="NCBIfam" id="TIGR01079">
    <property type="entry name" value="rplX_bact"/>
    <property type="match status" value="1"/>
</dbReference>
<dbReference type="PANTHER" id="PTHR12903">
    <property type="entry name" value="MITOCHONDRIAL RIBOSOMAL PROTEIN L24"/>
    <property type="match status" value="1"/>
</dbReference>
<dbReference type="Pfam" id="PF00467">
    <property type="entry name" value="KOW"/>
    <property type="match status" value="1"/>
</dbReference>
<dbReference type="Pfam" id="PF17136">
    <property type="entry name" value="ribosomal_L24"/>
    <property type="match status" value="1"/>
</dbReference>
<dbReference type="SMART" id="SM00739">
    <property type="entry name" value="KOW"/>
    <property type="match status" value="1"/>
</dbReference>
<dbReference type="SUPFAM" id="SSF50104">
    <property type="entry name" value="Translation proteins SH3-like domain"/>
    <property type="match status" value="1"/>
</dbReference>
<dbReference type="PROSITE" id="PS01108">
    <property type="entry name" value="RIBOSOMAL_L24"/>
    <property type="match status" value="1"/>
</dbReference>
<evidence type="ECO:0000255" key="1">
    <source>
        <dbReference type="HAMAP-Rule" id="MF_01326"/>
    </source>
</evidence>
<evidence type="ECO:0000305" key="2"/>